<proteinExistence type="inferred from homology"/>
<reference key="1">
    <citation type="journal article" date="2008" name="J. Bacteriol.">
        <title>Genome sequence of the fish pathogen Renibacterium salmoninarum suggests reductive evolution away from an environmental Arthrobacter ancestor.</title>
        <authorList>
            <person name="Wiens G.D."/>
            <person name="Rockey D.D."/>
            <person name="Wu Z."/>
            <person name="Chang J."/>
            <person name="Levy R."/>
            <person name="Crane S."/>
            <person name="Chen D.S."/>
            <person name="Capri G.R."/>
            <person name="Burnett J.R."/>
            <person name="Sudheesh P.S."/>
            <person name="Schipma M.J."/>
            <person name="Burd H."/>
            <person name="Bhattacharyya A."/>
            <person name="Rhodes L.D."/>
            <person name="Kaul R."/>
            <person name="Strom M.S."/>
        </authorList>
    </citation>
    <scope>NUCLEOTIDE SEQUENCE [LARGE SCALE GENOMIC DNA]</scope>
    <source>
        <strain>ATCC 33209 / DSM 20767 / JCM 11484 / NBRC 15589 / NCIMB 2235</strain>
    </source>
</reference>
<evidence type="ECO:0000255" key="1">
    <source>
        <dbReference type="HAMAP-Rule" id="MF_00159"/>
    </source>
</evidence>
<evidence type="ECO:0000256" key="2">
    <source>
        <dbReference type="SAM" id="MobiDB-lite"/>
    </source>
</evidence>
<dbReference type="EC" id="1.17.7.3" evidence="1"/>
<dbReference type="EMBL" id="CP000910">
    <property type="protein sequence ID" value="ABY22388.1"/>
    <property type="molecule type" value="Genomic_DNA"/>
</dbReference>
<dbReference type="RefSeq" id="WP_012244088.1">
    <property type="nucleotide sequence ID" value="NC_010168.1"/>
</dbReference>
<dbReference type="SMR" id="A9WR14"/>
<dbReference type="STRING" id="288705.RSal33209_0641"/>
<dbReference type="KEGG" id="rsa:RSal33209_0641"/>
<dbReference type="eggNOG" id="COG0821">
    <property type="taxonomic scope" value="Bacteria"/>
</dbReference>
<dbReference type="HOGENOM" id="CLU_042258_0_0_11"/>
<dbReference type="UniPathway" id="UPA00056">
    <property type="reaction ID" value="UER00096"/>
</dbReference>
<dbReference type="Proteomes" id="UP000002007">
    <property type="component" value="Chromosome"/>
</dbReference>
<dbReference type="GO" id="GO:0051539">
    <property type="term" value="F:4 iron, 4 sulfur cluster binding"/>
    <property type="evidence" value="ECO:0007669"/>
    <property type="project" value="UniProtKB-UniRule"/>
</dbReference>
<dbReference type="GO" id="GO:0046429">
    <property type="term" value="F:4-hydroxy-3-methylbut-2-en-1-yl diphosphate synthase activity (ferredoxin)"/>
    <property type="evidence" value="ECO:0007669"/>
    <property type="project" value="UniProtKB-UniRule"/>
</dbReference>
<dbReference type="GO" id="GO:0141197">
    <property type="term" value="F:4-hydroxy-3-methylbut-2-enyl-diphosphate synthase activity (flavodoxin)"/>
    <property type="evidence" value="ECO:0007669"/>
    <property type="project" value="UniProtKB-EC"/>
</dbReference>
<dbReference type="GO" id="GO:0005506">
    <property type="term" value="F:iron ion binding"/>
    <property type="evidence" value="ECO:0007669"/>
    <property type="project" value="InterPro"/>
</dbReference>
<dbReference type="GO" id="GO:0019288">
    <property type="term" value="P:isopentenyl diphosphate biosynthetic process, methylerythritol 4-phosphate pathway"/>
    <property type="evidence" value="ECO:0007669"/>
    <property type="project" value="UniProtKB-UniRule"/>
</dbReference>
<dbReference type="GO" id="GO:0016114">
    <property type="term" value="P:terpenoid biosynthetic process"/>
    <property type="evidence" value="ECO:0007669"/>
    <property type="project" value="InterPro"/>
</dbReference>
<dbReference type="FunFam" id="3.20.20.20:FF:000001">
    <property type="entry name" value="4-hydroxy-3-methylbut-2-en-1-yl diphosphate synthase (flavodoxin)"/>
    <property type="match status" value="1"/>
</dbReference>
<dbReference type="FunFam" id="3.30.413.10:FF:000001">
    <property type="entry name" value="4-hydroxy-3-methylbut-2-en-1-yl diphosphate synthase (flavodoxin)"/>
    <property type="match status" value="1"/>
</dbReference>
<dbReference type="Gene3D" id="3.20.20.20">
    <property type="entry name" value="Dihydropteroate synthase-like"/>
    <property type="match status" value="1"/>
</dbReference>
<dbReference type="Gene3D" id="3.30.413.10">
    <property type="entry name" value="Sulfite Reductase Hemoprotein, domain 1"/>
    <property type="match status" value="1"/>
</dbReference>
<dbReference type="HAMAP" id="MF_00159">
    <property type="entry name" value="IspG"/>
    <property type="match status" value="1"/>
</dbReference>
<dbReference type="InterPro" id="IPR011005">
    <property type="entry name" value="Dihydropteroate_synth-like_sf"/>
</dbReference>
<dbReference type="InterPro" id="IPR016425">
    <property type="entry name" value="IspG_bac"/>
</dbReference>
<dbReference type="InterPro" id="IPR004588">
    <property type="entry name" value="IspG_bac-typ"/>
</dbReference>
<dbReference type="InterPro" id="IPR045854">
    <property type="entry name" value="NO2/SO3_Rdtase_4Fe4S_sf"/>
</dbReference>
<dbReference type="NCBIfam" id="TIGR00612">
    <property type="entry name" value="ispG_gcpE"/>
    <property type="match status" value="1"/>
</dbReference>
<dbReference type="NCBIfam" id="NF001540">
    <property type="entry name" value="PRK00366.1"/>
    <property type="match status" value="1"/>
</dbReference>
<dbReference type="PANTHER" id="PTHR30454">
    <property type="entry name" value="4-HYDROXY-3-METHYLBUT-2-EN-1-YL DIPHOSPHATE SYNTHASE"/>
    <property type="match status" value="1"/>
</dbReference>
<dbReference type="PANTHER" id="PTHR30454:SF0">
    <property type="entry name" value="4-HYDROXY-3-METHYLBUT-2-EN-1-YL DIPHOSPHATE SYNTHASE (FERREDOXIN), CHLOROPLASTIC"/>
    <property type="match status" value="1"/>
</dbReference>
<dbReference type="Pfam" id="PF04551">
    <property type="entry name" value="GcpE"/>
    <property type="match status" value="1"/>
</dbReference>
<dbReference type="PIRSF" id="PIRSF004640">
    <property type="entry name" value="IspG"/>
    <property type="match status" value="1"/>
</dbReference>
<dbReference type="SUPFAM" id="SSF51717">
    <property type="entry name" value="Dihydropteroate synthetase-like"/>
    <property type="match status" value="1"/>
</dbReference>
<dbReference type="SUPFAM" id="SSF56014">
    <property type="entry name" value="Nitrite and sulphite reductase 4Fe-4S domain-like"/>
    <property type="match status" value="1"/>
</dbReference>
<name>ISPG_RENSM</name>
<keyword id="KW-0004">4Fe-4S</keyword>
<keyword id="KW-0408">Iron</keyword>
<keyword id="KW-0411">Iron-sulfur</keyword>
<keyword id="KW-0414">Isoprene biosynthesis</keyword>
<keyword id="KW-0479">Metal-binding</keyword>
<keyword id="KW-0560">Oxidoreductase</keyword>
<keyword id="KW-1185">Reference proteome</keyword>
<gene>
    <name evidence="1" type="primary">ispG</name>
    <name type="ordered locus">RSal33209_0641</name>
</gene>
<protein>
    <recommendedName>
        <fullName evidence="1">4-hydroxy-3-methylbut-2-en-1-yl diphosphate synthase (flavodoxin)</fullName>
        <ecNumber evidence="1">1.17.7.3</ecNumber>
    </recommendedName>
    <alternativeName>
        <fullName evidence="1">1-hydroxy-2-methyl-2-(E)-butenyl 4-diphosphate synthase</fullName>
    </alternativeName>
</protein>
<feature type="chain" id="PRO_1000076894" description="4-hydroxy-3-methylbut-2-en-1-yl diphosphate synthase (flavodoxin)">
    <location>
        <begin position="1"/>
        <end position="391"/>
    </location>
</feature>
<feature type="region of interest" description="Disordered" evidence="2">
    <location>
        <begin position="372"/>
        <end position="391"/>
    </location>
</feature>
<feature type="binding site" evidence="1">
    <location>
        <position position="281"/>
    </location>
    <ligand>
        <name>[4Fe-4S] cluster</name>
        <dbReference type="ChEBI" id="CHEBI:49883"/>
    </ligand>
</feature>
<feature type="binding site" evidence="1">
    <location>
        <position position="284"/>
    </location>
    <ligand>
        <name>[4Fe-4S] cluster</name>
        <dbReference type="ChEBI" id="CHEBI:49883"/>
    </ligand>
</feature>
<feature type="binding site" evidence="1">
    <location>
        <position position="316"/>
    </location>
    <ligand>
        <name>[4Fe-4S] cluster</name>
        <dbReference type="ChEBI" id="CHEBI:49883"/>
    </ligand>
</feature>
<feature type="binding site" evidence="1">
    <location>
        <position position="323"/>
    </location>
    <ligand>
        <name>[4Fe-4S] cluster</name>
        <dbReference type="ChEBI" id="CHEBI:49883"/>
    </ligand>
</feature>
<comment type="function">
    <text evidence="1">Converts 2C-methyl-D-erythritol 2,4-cyclodiphosphate (ME-2,4cPP) into 1-hydroxy-2-methyl-2-(E)-butenyl 4-diphosphate.</text>
</comment>
<comment type="catalytic activity">
    <reaction evidence="1">
        <text>(2E)-4-hydroxy-3-methylbut-2-enyl diphosphate + oxidized [flavodoxin] + H2O + 2 H(+) = 2-C-methyl-D-erythritol 2,4-cyclic diphosphate + reduced [flavodoxin]</text>
        <dbReference type="Rhea" id="RHEA:43604"/>
        <dbReference type="Rhea" id="RHEA-COMP:10622"/>
        <dbReference type="Rhea" id="RHEA-COMP:10623"/>
        <dbReference type="ChEBI" id="CHEBI:15377"/>
        <dbReference type="ChEBI" id="CHEBI:15378"/>
        <dbReference type="ChEBI" id="CHEBI:57618"/>
        <dbReference type="ChEBI" id="CHEBI:58210"/>
        <dbReference type="ChEBI" id="CHEBI:58483"/>
        <dbReference type="ChEBI" id="CHEBI:128753"/>
        <dbReference type="EC" id="1.17.7.3"/>
    </reaction>
</comment>
<comment type="cofactor">
    <cofactor evidence="1">
        <name>[4Fe-4S] cluster</name>
        <dbReference type="ChEBI" id="CHEBI:49883"/>
    </cofactor>
    <text evidence="1">Binds 1 [4Fe-4S] cluster.</text>
</comment>
<comment type="pathway">
    <text evidence="1">Isoprenoid biosynthesis; isopentenyl diphosphate biosynthesis via DXP pathway; isopentenyl diphosphate from 1-deoxy-D-xylulose 5-phosphate: step 5/6.</text>
</comment>
<comment type="similarity">
    <text evidence="1">Belongs to the IspG family.</text>
</comment>
<accession>A9WR14</accession>
<sequence>MTSVSLGMPAAPPPVLAPRRKTRQIKVGSVGVGSDSPISLQSMTTTPTTDINATLQQIAELTASGCDIVRVACPSADDAEALPIIAKKSQIPVIADIHFQPKYVFAAIEAGCAAVRVNPGNIRKFDDQIKEIAQAAKDHGTSIRIGVNAGSLDPRLMEKYGKATPEALVESAVWEASLFEEHDFHDFKISVKHNDPVVMVRAYELLAERGAWPLHLGVTEAGPAFQGTIKSATAFGALLSKGIGDTIRVSLSAPPVEEIKVGNQILQSLNLRPRKLEIVSCPSCGRAQVDVYTLAEEVTAGLEGMEIPLRVAVMGCVVNGPGEAREADLGVASGNGKGQIFVKGEVIKTVPESQIVETLIEEAMRIAEEYEEMGGEDGQGGIKGSPVVSVS</sequence>
<organism>
    <name type="scientific">Renibacterium salmoninarum (strain ATCC 33209 / DSM 20767 / JCM 11484 / NBRC 15589 / NCIMB 2235)</name>
    <dbReference type="NCBI Taxonomy" id="288705"/>
    <lineage>
        <taxon>Bacteria</taxon>
        <taxon>Bacillati</taxon>
        <taxon>Actinomycetota</taxon>
        <taxon>Actinomycetes</taxon>
        <taxon>Micrococcales</taxon>
        <taxon>Micrococcaceae</taxon>
        <taxon>Renibacterium</taxon>
    </lineage>
</organism>